<accession>Q5XXR2</accession>
<proteinExistence type="evidence at transcript level"/>
<sequence>MAKMSLSSYLLILTFSLFSQGILLSASKSIRNLEDDMVFNTFRLGKALQKEDTPQKSVVAPSLEQYKNDDSSFMNDEENKNSKNTGSKHNFLNHGLPLNLAIKPYLALKGSVAFPAENGVQNTESTQEKREIGDEENSAKFPIGRRDFDMLRCMLGRVYRPCWQV</sequence>
<organism>
    <name type="scientific">Canis lupus familiaris</name>
    <name type="common">Dog</name>
    <name type="synonym">Canis familiaris</name>
    <dbReference type="NCBI Taxonomy" id="9615"/>
    <lineage>
        <taxon>Eukaryota</taxon>
        <taxon>Metazoa</taxon>
        <taxon>Chordata</taxon>
        <taxon>Craniata</taxon>
        <taxon>Vertebrata</taxon>
        <taxon>Euteleostomi</taxon>
        <taxon>Mammalia</taxon>
        <taxon>Eutheria</taxon>
        <taxon>Laurasiatheria</taxon>
        <taxon>Carnivora</taxon>
        <taxon>Caniformia</taxon>
        <taxon>Canidae</taxon>
        <taxon>Canis</taxon>
    </lineage>
</organism>
<dbReference type="EMBL" id="AY725987">
    <property type="protein sequence ID" value="AAU43637.1"/>
    <property type="molecule type" value="mRNA"/>
</dbReference>
<dbReference type="RefSeq" id="NP_001005755.1">
    <property type="nucleotide sequence ID" value="NM_001005755.1"/>
</dbReference>
<dbReference type="FunCoup" id="Q5XXR2">
    <property type="interactions" value="55"/>
</dbReference>
<dbReference type="STRING" id="9615.ENSCAFP00000010824"/>
<dbReference type="PaxDb" id="9612-ENSCAFP00000010824"/>
<dbReference type="Ensembl" id="ENSCAFT00000011681.3">
    <property type="protein sequence ID" value="ENSCAFP00000010824.2"/>
    <property type="gene ID" value="ENSCAFG00000007297.3"/>
</dbReference>
<dbReference type="Ensembl" id="ENSCAFT00030017902.1">
    <property type="protein sequence ID" value="ENSCAFP00030015634.1"/>
    <property type="gene ID" value="ENSCAFG00030009674.1"/>
</dbReference>
<dbReference type="Ensembl" id="ENSCAFT00040031414.1">
    <property type="protein sequence ID" value="ENSCAFP00040027319.1"/>
    <property type="gene ID" value="ENSCAFG00040017015.1"/>
</dbReference>
<dbReference type="Ensembl" id="ENSCAFT00845016275.1">
    <property type="protein sequence ID" value="ENSCAFP00845012661.1"/>
    <property type="gene ID" value="ENSCAFG00845009246.1"/>
</dbReference>
<dbReference type="GeneID" id="449022"/>
<dbReference type="KEGG" id="cfa:449022"/>
<dbReference type="CTD" id="5367"/>
<dbReference type="VEuPathDB" id="HostDB:ENSCAFG00845009246"/>
<dbReference type="VGNC" id="VGNC:44729">
    <property type="gene designation" value="PMCH"/>
</dbReference>
<dbReference type="eggNOG" id="ENOG502RZ12">
    <property type="taxonomic scope" value="Eukaryota"/>
</dbReference>
<dbReference type="GeneTree" id="ENSGT00390000004984"/>
<dbReference type="HOGENOM" id="CLU_1610172_0_0_1"/>
<dbReference type="InParanoid" id="Q5XXR2"/>
<dbReference type="OMA" id="NTFRMGK"/>
<dbReference type="OrthoDB" id="8639774at2759"/>
<dbReference type="TreeFam" id="TF330944"/>
<dbReference type="Reactome" id="R-CFA-375276">
    <property type="pathway name" value="Peptide ligand-binding receptors"/>
</dbReference>
<dbReference type="Reactome" id="R-CFA-416476">
    <property type="pathway name" value="G alpha (q) signalling events"/>
</dbReference>
<dbReference type="Reactome" id="R-CFA-418594">
    <property type="pathway name" value="G alpha (i) signalling events"/>
</dbReference>
<dbReference type="Proteomes" id="UP000002254">
    <property type="component" value="Chromosome 15"/>
</dbReference>
<dbReference type="Proteomes" id="UP000694429">
    <property type="component" value="Chromosome 15"/>
</dbReference>
<dbReference type="Proteomes" id="UP000694542">
    <property type="component" value="Chromosome 15"/>
</dbReference>
<dbReference type="Proteomes" id="UP000805418">
    <property type="component" value="Chromosome 15"/>
</dbReference>
<dbReference type="Bgee" id="ENSCAFG00000007297">
    <property type="expression patterns" value="Expressed in keratinocyte and 37 other cell types or tissues"/>
</dbReference>
<dbReference type="GO" id="GO:0005576">
    <property type="term" value="C:extracellular region"/>
    <property type="evidence" value="ECO:0007669"/>
    <property type="project" value="UniProtKB-SubCell"/>
</dbReference>
<dbReference type="GO" id="GO:0005634">
    <property type="term" value="C:nucleus"/>
    <property type="evidence" value="ECO:0007669"/>
    <property type="project" value="Ensembl"/>
</dbReference>
<dbReference type="GO" id="GO:0045202">
    <property type="term" value="C:synapse"/>
    <property type="evidence" value="ECO:0007669"/>
    <property type="project" value="GOC"/>
</dbReference>
<dbReference type="GO" id="GO:0030354">
    <property type="term" value="F:melanin-concentrating hormone activity"/>
    <property type="evidence" value="ECO:0007669"/>
    <property type="project" value="InterPro"/>
</dbReference>
<dbReference type="GO" id="GO:0031777">
    <property type="term" value="F:type 1 melanin-concentrating hormone receptor binding"/>
    <property type="evidence" value="ECO:0000318"/>
    <property type="project" value="GO_Central"/>
</dbReference>
<dbReference type="GO" id="GO:0007268">
    <property type="term" value="P:chemical synaptic transmission"/>
    <property type="evidence" value="ECO:0007669"/>
    <property type="project" value="InterPro"/>
</dbReference>
<dbReference type="GO" id="GO:0007631">
    <property type="term" value="P:feeding behavior"/>
    <property type="evidence" value="ECO:0007669"/>
    <property type="project" value="Ensembl"/>
</dbReference>
<dbReference type="GO" id="GO:0032227">
    <property type="term" value="P:negative regulation of synaptic transmission, dopaminergic"/>
    <property type="evidence" value="ECO:0000318"/>
    <property type="project" value="GO_Central"/>
</dbReference>
<dbReference type="GO" id="GO:0007218">
    <property type="term" value="P:neuropeptide signaling pathway"/>
    <property type="evidence" value="ECO:0007669"/>
    <property type="project" value="UniProtKB-KW"/>
</dbReference>
<dbReference type="InterPro" id="IPR005456">
    <property type="entry name" value="Prepro-melanin_conc_hormone"/>
</dbReference>
<dbReference type="PANTHER" id="PTHR12091">
    <property type="entry name" value="MELANIN-CONCENTRATING HORMONE"/>
    <property type="match status" value="1"/>
</dbReference>
<dbReference type="PANTHER" id="PTHR12091:SF0">
    <property type="entry name" value="PRO-MCH"/>
    <property type="match status" value="1"/>
</dbReference>
<dbReference type="Pfam" id="PF05824">
    <property type="entry name" value="Pro-MCH"/>
    <property type="match status" value="1"/>
</dbReference>
<dbReference type="PRINTS" id="PR01641">
    <property type="entry name" value="PROMCHFAMILY"/>
</dbReference>
<name>MCH_CANLF</name>
<keyword id="KW-0027">Amidation</keyword>
<keyword id="KW-0165">Cleavage on pair of basic residues</keyword>
<keyword id="KW-1015">Disulfide bond</keyword>
<keyword id="KW-0372">Hormone</keyword>
<keyword id="KW-0527">Neuropeptide</keyword>
<keyword id="KW-1185">Reference proteome</keyword>
<keyword id="KW-0964">Secreted</keyword>
<keyword id="KW-0732">Signal</keyword>
<reference key="1">
    <citation type="submission" date="2004-08" db="EMBL/GenBank/DDBJ databases">
        <title>Canine pro-melanin-concentrating hormone.</title>
        <authorList>
            <person name="Steflik J."/>
            <person name="Waters S.M."/>
        </authorList>
    </citation>
    <scope>NUCLEOTIDE SEQUENCE [MRNA]</scope>
    <source>
        <strain>Beagle</strain>
        <tissue>Hypothalamus</tissue>
    </source>
</reference>
<comment type="function">
    <text evidence="1">MCH may act as a neurotransmitter or neuromodulator in a broad array of neuronal functions directed toward the regulation of goal-directed behavior, such as food intake, and general arousal.</text>
</comment>
<comment type="subcellular location">
    <subcellularLocation>
        <location evidence="1">Secreted</location>
    </subcellularLocation>
</comment>
<comment type="PTM">
    <text evidence="1">Pro-MCH is processed differentially in the brain and in peripheral organs producing two neuropeptides; NEI and MCH. A third peptide, NGE, may also be produced. Preferential processing in neurons by prohormone convertase 2 (PC2) generates NEI. MCH is generated in neurons of the lateral hypothalmic area by several prohormone convertases including PC1/3, PC2 and PC5/6 (By similarity).</text>
</comment>
<comment type="similarity">
    <text evidence="4">Belongs to the melanin-concentrating hormone family.</text>
</comment>
<protein>
    <recommendedName>
        <fullName>Pro-MCH</fullName>
    </recommendedName>
    <component>
        <recommendedName>
            <fullName>Neuropeptide-glycine-glutamic acid</fullName>
            <shortName>NGE</shortName>
            <shortName>Neuropeptide G-E</shortName>
        </recommendedName>
    </component>
    <component>
        <recommendedName>
            <fullName>Neuropeptide-glutamic acid-isoleucine</fullName>
            <shortName>NEI</shortName>
            <shortName>Neuropeptide E-I</shortName>
        </recommendedName>
    </component>
    <component>
        <recommendedName>
            <fullName>Melanin-concentrating hormone</fullName>
            <shortName>MCH</shortName>
        </recommendedName>
    </component>
</protein>
<feature type="signal peptide" evidence="2">
    <location>
        <begin position="1"/>
        <end position="21"/>
    </location>
</feature>
<feature type="chain" id="PRO_0000019100" description="Pro-MCH">
    <location>
        <begin position="22"/>
        <end position="165"/>
    </location>
</feature>
<feature type="peptide" id="PRO_0000019101" description="Neuropeptide-glycine-glutamic acid" evidence="2">
    <location>
        <begin position="110"/>
        <end position="128"/>
    </location>
</feature>
<feature type="peptide" id="PRO_0000019102" description="Neuropeptide-glutamic acid-isoleucine">
    <location>
        <begin position="131"/>
        <end position="143"/>
    </location>
</feature>
<feature type="peptide" id="PRO_0000019103" description="Melanin-concentrating hormone">
    <location>
        <begin position="147"/>
        <end position="165"/>
    </location>
</feature>
<feature type="region of interest" description="Disordered" evidence="3">
    <location>
        <begin position="68"/>
        <end position="88"/>
    </location>
</feature>
<feature type="modified residue" description="Isoleucine amide" evidence="1">
    <location>
        <position position="143"/>
    </location>
</feature>
<feature type="disulfide bond" evidence="1">
    <location>
        <begin position="153"/>
        <end position="162"/>
    </location>
</feature>
<gene>
    <name type="primary">PMCH</name>
    <name type="synonym">MCH</name>
</gene>
<evidence type="ECO:0000250" key="1"/>
<evidence type="ECO:0000255" key="2"/>
<evidence type="ECO:0000256" key="3">
    <source>
        <dbReference type="SAM" id="MobiDB-lite"/>
    </source>
</evidence>
<evidence type="ECO:0000305" key="4"/>